<dbReference type="EMBL" id="CP000857">
    <property type="protein sequence ID" value="ACN48598.1"/>
    <property type="molecule type" value="Genomic_DNA"/>
</dbReference>
<dbReference type="RefSeq" id="WP_000331471.1">
    <property type="nucleotide sequence ID" value="NC_012125.1"/>
</dbReference>
<dbReference type="SMR" id="C0Q6G8"/>
<dbReference type="KEGG" id="sei:SPC_4548"/>
<dbReference type="HOGENOM" id="CLU_076075_2_0_6"/>
<dbReference type="Proteomes" id="UP000001599">
    <property type="component" value="Chromosome"/>
</dbReference>
<dbReference type="GO" id="GO:0005737">
    <property type="term" value="C:cytoplasm"/>
    <property type="evidence" value="ECO:0007669"/>
    <property type="project" value="UniProtKB-SubCell"/>
</dbReference>
<dbReference type="GO" id="GO:0046872">
    <property type="term" value="F:metal ion binding"/>
    <property type="evidence" value="ECO:0007669"/>
    <property type="project" value="UniProtKB-KW"/>
</dbReference>
<dbReference type="GO" id="GO:0030091">
    <property type="term" value="P:protein repair"/>
    <property type="evidence" value="ECO:0007669"/>
    <property type="project" value="UniProtKB-UniRule"/>
</dbReference>
<dbReference type="GO" id="GO:0051409">
    <property type="term" value="P:response to nitrosative stress"/>
    <property type="evidence" value="ECO:0007669"/>
    <property type="project" value="UniProtKB-UniRule"/>
</dbReference>
<dbReference type="GO" id="GO:0006979">
    <property type="term" value="P:response to oxidative stress"/>
    <property type="evidence" value="ECO:0007669"/>
    <property type="project" value="UniProtKB-UniRule"/>
</dbReference>
<dbReference type="FunFam" id="1.20.120.520:FF:000001">
    <property type="entry name" value="Iron-sulfur cluster repair protein YtfE"/>
    <property type="match status" value="1"/>
</dbReference>
<dbReference type="Gene3D" id="1.20.120.520">
    <property type="entry name" value="nmb1532 protein domain like"/>
    <property type="match status" value="1"/>
</dbReference>
<dbReference type="HAMAP" id="MF_01606">
    <property type="entry name" value="RIC_YtfE"/>
    <property type="match status" value="1"/>
</dbReference>
<dbReference type="InterPro" id="IPR023742">
    <property type="entry name" value="FeS-repair_YftE"/>
</dbReference>
<dbReference type="InterPro" id="IPR012312">
    <property type="entry name" value="Hemerythrin-like"/>
</dbReference>
<dbReference type="InterPro" id="IPR019903">
    <property type="entry name" value="RIC_family"/>
</dbReference>
<dbReference type="NCBIfam" id="TIGR03652">
    <property type="entry name" value="FeS_repair_RIC"/>
    <property type="match status" value="1"/>
</dbReference>
<dbReference type="NCBIfam" id="NF008221">
    <property type="entry name" value="PRK10992.1"/>
    <property type="match status" value="1"/>
</dbReference>
<dbReference type="PANTHER" id="PTHR36438">
    <property type="entry name" value="IRON-SULFUR CLUSTER REPAIR PROTEIN YTFE"/>
    <property type="match status" value="1"/>
</dbReference>
<dbReference type="PANTHER" id="PTHR36438:SF1">
    <property type="entry name" value="IRON-SULFUR CLUSTER REPAIR PROTEIN YTFE"/>
    <property type="match status" value="1"/>
</dbReference>
<dbReference type="Pfam" id="PF01814">
    <property type="entry name" value="Hemerythrin"/>
    <property type="match status" value="1"/>
</dbReference>
<dbReference type="Pfam" id="PF04405">
    <property type="entry name" value="ScdA_N"/>
    <property type="match status" value="1"/>
</dbReference>
<accession>C0Q6G8</accession>
<name>YTFE_SALPC</name>
<evidence type="ECO:0000255" key="1">
    <source>
        <dbReference type="HAMAP-Rule" id="MF_01606"/>
    </source>
</evidence>
<comment type="function">
    <text evidence="1">Di-iron-containing protein involved in the repair of iron-sulfur clusters damaged by oxidative and nitrosative stress conditions.</text>
</comment>
<comment type="subunit">
    <text evidence="1">Homodimer.</text>
</comment>
<comment type="subcellular location">
    <subcellularLocation>
        <location evidence="1">Cytoplasm</location>
    </subcellularLocation>
</comment>
<comment type="similarity">
    <text evidence="1">Belongs to the RIC family. YtfE subfamily.</text>
</comment>
<protein>
    <recommendedName>
        <fullName evidence="1">Iron-sulfur cluster repair protein YtfE</fullName>
    </recommendedName>
</protein>
<proteinExistence type="inferred from homology"/>
<organism>
    <name type="scientific">Salmonella paratyphi C (strain RKS4594)</name>
    <dbReference type="NCBI Taxonomy" id="476213"/>
    <lineage>
        <taxon>Bacteria</taxon>
        <taxon>Pseudomonadati</taxon>
        <taxon>Pseudomonadota</taxon>
        <taxon>Gammaproteobacteria</taxon>
        <taxon>Enterobacterales</taxon>
        <taxon>Enterobacteriaceae</taxon>
        <taxon>Salmonella</taxon>
    </lineage>
</organism>
<sequence>MAYRDQPLGELALSIPRASALFRQYDMDYCCGGKQTLARAAARHDVDIDIIEAQLAQLAEQPIEKDWRAVPLADIIDHIVVRYHDRHREQLPELILQATKVERVHADKPNVPRGLTKYLTALHEELSSHMMKEEQILFPMIKQGMGRQATGPISVMESEHDEAGELVDVIKHVTQNVTPPPEACTTWKAMYNGINEMIDDLMEHISLENNVLFPRALAGE</sequence>
<reference key="1">
    <citation type="journal article" date="2009" name="PLoS ONE">
        <title>Salmonella paratyphi C: genetic divergence from Salmonella choleraesuis and pathogenic convergence with Salmonella typhi.</title>
        <authorList>
            <person name="Liu W.-Q."/>
            <person name="Feng Y."/>
            <person name="Wang Y."/>
            <person name="Zou Q.-H."/>
            <person name="Chen F."/>
            <person name="Guo J.-T."/>
            <person name="Peng Y.-H."/>
            <person name="Jin Y."/>
            <person name="Li Y.-G."/>
            <person name="Hu S.-N."/>
            <person name="Johnston R.N."/>
            <person name="Liu G.-R."/>
            <person name="Liu S.-L."/>
        </authorList>
    </citation>
    <scope>NUCLEOTIDE SEQUENCE [LARGE SCALE GENOMIC DNA]</scope>
    <source>
        <strain>RKS4594</strain>
    </source>
</reference>
<feature type="chain" id="PRO_1000185842" description="Iron-sulfur cluster repair protein YtfE">
    <location>
        <begin position="1"/>
        <end position="220"/>
    </location>
</feature>
<keyword id="KW-0963">Cytoplasm</keyword>
<keyword id="KW-0408">Iron</keyword>
<keyword id="KW-0479">Metal-binding</keyword>
<keyword id="KW-0346">Stress response</keyword>
<gene>
    <name evidence="1" type="primary">ytfE</name>
    <name type="ordered locus">SPC_4548</name>
</gene>